<gene>
    <name evidence="1" type="primary">hmuV</name>
    <name type="ordered locus">YPN_3388</name>
    <name type="ORF">YP516_3849</name>
</gene>
<accession>Q1CE65</accession>
<accession>C4GYB0</accession>
<feature type="chain" id="PRO_0000269642" description="Hemin import ATP-binding protein HmuV">
    <location>
        <begin position="1"/>
        <end position="266"/>
    </location>
</feature>
<feature type="domain" description="ABC transporter" evidence="1">
    <location>
        <begin position="12"/>
        <end position="248"/>
    </location>
</feature>
<feature type="binding site" evidence="1">
    <location>
        <begin position="44"/>
        <end position="51"/>
    </location>
    <ligand>
        <name>ATP</name>
        <dbReference type="ChEBI" id="CHEBI:30616"/>
    </ligand>
</feature>
<evidence type="ECO:0000255" key="1">
    <source>
        <dbReference type="HAMAP-Rule" id="MF_01718"/>
    </source>
</evidence>
<reference key="1">
    <citation type="journal article" date="2006" name="J. Bacteriol.">
        <title>Complete genome sequence of Yersinia pestis strains Antiqua and Nepal516: evidence of gene reduction in an emerging pathogen.</title>
        <authorList>
            <person name="Chain P.S.G."/>
            <person name="Hu P."/>
            <person name="Malfatti S.A."/>
            <person name="Radnedge L."/>
            <person name="Larimer F."/>
            <person name="Vergez L.M."/>
            <person name="Worsham P."/>
            <person name="Chu M.C."/>
            <person name="Andersen G.L."/>
        </authorList>
    </citation>
    <scope>NUCLEOTIDE SEQUENCE [LARGE SCALE GENOMIC DNA]</scope>
    <source>
        <strain>Nepal516</strain>
    </source>
</reference>
<reference key="2">
    <citation type="submission" date="2009-04" db="EMBL/GenBank/DDBJ databases">
        <title>Yersinia pestis Nepal516A whole genome shotgun sequencing project.</title>
        <authorList>
            <person name="Plunkett G. III"/>
            <person name="Anderson B.D."/>
            <person name="Baumler D.J."/>
            <person name="Burland V."/>
            <person name="Cabot E.L."/>
            <person name="Glasner J.D."/>
            <person name="Mau B."/>
            <person name="Neeno-Eckwall E."/>
            <person name="Perna N.T."/>
            <person name="Munk A.C."/>
            <person name="Tapia R."/>
            <person name="Green L.D."/>
            <person name="Rogers Y.C."/>
            <person name="Detter J.C."/>
            <person name="Bruce D.C."/>
            <person name="Brettin T.S."/>
        </authorList>
    </citation>
    <scope>NUCLEOTIDE SEQUENCE [LARGE SCALE GENOMIC DNA]</scope>
    <source>
        <strain>Nepal516</strain>
    </source>
</reference>
<dbReference type="EC" id="7.6.2.-" evidence="1"/>
<dbReference type="EMBL" id="CP000305">
    <property type="protein sequence ID" value="ABG19715.1"/>
    <property type="molecule type" value="Genomic_DNA"/>
</dbReference>
<dbReference type="EMBL" id="ACNQ01000017">
    <property type="protein sequence ID" value="EEO75910.1"/>
    <property type="molecule type" value="Genomic_DNA"/>
</dbReference>
<dbReference type="RefSeq" id="WP_002209058.1">
    <property type="nucleotide sequence ID" value="NZ_ACNQ01000017.1"/>
</dbReference>
<dbReference type="SMR" id="Q1CE65"/>
<dbReference type="KEGG" id="ypn:YPN_3388"/>
<dbReference type="HOGENOM" id="CLU_000604_1_11_6"/>
<dbReference type="Proteomes" id="UP000008936">
    <property type="component" value="Chromosome"/>
</dbReference>
<dbReference type="GO" id="GO:0005886">
    <property type="term" value="C:plasma membrane"/>
    <property type="evidence" value="ECO:0007669"/>
    <property type="project" value="UniProtKB-SubCell"/>
</dbReference>
<dbReference type="GO" id="GO:0005524">
    <property type="term" value="F:ATP binding"/>
    <property type="evidence" value="ECO:0007669"/>
    <property type="project" value="UniProtKB-KW"/>
</dbReference>
<dbReference type="GO" id="GO:0016887">
    <property type="term" value="F:ATP hydrolysis activity"/>
    <property type="evidence" value="ECO:0007669"/>
    <property type="project" value="InterPro"/>
</dbReference>
<dbReference type="CDD" id="cd03214">
    <property type="entry name" value="ABC_Iron-Siderophores_B12_Hemin"/>
    <property type="match status" value="1"/>
</dbReference>
<dbReference type="FunFam" id="3.40.50.300:FF:000134">
    <property type="entry name" value="Iron-enterobactin ABC transporter ATP-binding protein"/>
    <property type="match status" value="1"/>
</dbReference>
<dbReference type="Gene3D" id="3.40.50.300">
    <property type="entry name" value="P-loop containing nucleotide triphosphate hydrolases"/>
    <property type="match status" value="1"/>
</dbReference>
<dbReference type="InterPro" id="IPR003593">
    <property type="entry name" value="AAA+_ATPase"/>
</dbReference>
<dbReference type="InterPro" id="IPR003439">
    <property type="entry name" value="ABC_transporter-like_ATP-bd"/>
</dbReference>
<dbReference type="InterPro" id="IPR017871">
    <property type="entry name" value="ABC_transporter-like_CS"/>
</dbReference>
<dbReference type="InterPro" id="IPR027417">
    <property type="entry name" value="P-loop_NTPase"/>
</dbReference>
<dbReference type="NCBIfam" id="NF010068">
    <property type="entry name" value="PRK13548.1"/>
    <property type="match status" value="1"/>
</dbReference>
<dbReference type="PANTHER" id="PTHR42794">
    <property type="entry name" value="HEMIN IMPORT ATP-BINDING PROTEIN HMUV"/>
    <property type="match status" value="1"/>
</dbReference>
<dbReference type="PANTHER" id="PTHR42794:SF1">
    <property type="entry name" value="HEMIN IMPORT ATP-BINDING PROTEIN HMUV"/>
    <property type="match status" value="1"/>
</dbReference>
<dbReference type="Pfam" id="PF00005">
    <property type="entry name" value="ABC_tran"/>
    <property type="match status" value="1"/>
</dbReference>
<dbReference type="SMART" id="SM00382">
    <property type="entry name" value="AAA"/>
    <property type="match status" value="1"/>
</dbReference>
<dbReference type="SUPFAM" id="SSF52540">
    <property type="entry name" value="P-loop containing nucleoside triphosphate hydrolases"/>
    <property type="match status" value="1"/>
</dbReference>
<dbReference type="PROSITE" id="PS00211">
    <property type="entry name" value="ABC_TRANSPORTER_1"/>
    <property type="match status" value="1"/>
</dbReference>
<dbReference type="PROSITE" id="PS50893">
    <property type="entry name" value="ABC_TRANSPORTER_2"/>
    <property type="match status" value="1"/>
</dbReference>
<dbReference type="PROSITE" id="PS51261">
    <property type="entry name" value="HMUV"/>
    <property type="match status" value="1"/>
</dbReference>
<protein>
    <recommendedName>
        <fullName evidence="1">Hemin import ATP-binding protein HmuV</fullName>
        <ecNumber evidence="1">7.6.2.-</ecNumber>
    </recommendedName>
</protein>
<keyword id="KW-0067">ATP-binding</keyword>
<keyword id="KW-0997">Cell inner membrane</keyword>
<keyword id="KW-1003">Cell membrane</keyword>
<keyword id="KW-0472">Membrane</keyword>
<keyword id="KW-0547">Nucleotide-binding</keyword>
<keyword id="KW-1278">Translocase</keyword>
<keyword id="KW-0813">Transport</keyword>
<proteinExistence type="inferred from homology"/>
<organism>
    <name type="scientific">Yersinia pestis bv. Antiqua (strain Nepal516)</name>
    <dbReference type="NCBI Taxonomy" id="377628"/>
    <lineage>
        <taxon>Bacteria</taxon>
        <taxon>Pseudomonadati</taxon>
        <taxon>Pseudomonadota</taxon>
        <taxon>Gammaproteobacteria</taxon>
        <taxon>Enterobacterales</taxon>
        <taxon>Yersiniaceae</taxon>
        <taxon>Yersinia</taxon>
    </lineage>
</organism>
<comment type="function">
    <text evidence="1">Part of the ABC transporter complex HmuTUV involved in hemin import. Responsible for energy coupling to the transport system.</text>
</comment>
<comment type="subunit">
    <text evidence="1">The complex is composed of two ATP-binding proteins (HmuV), two transmembrane proteins (HmuU) and a solute-binding protein (HmuT).</text>
</comment>
<comment type="subcellular location">
    <subcellularLocation>
        <location evidence="1">Cell inner membrane</location>
        <topology evidence="1">Peripheral membrane protein</topology>
    </subcellularLocation>
</comment>
<comment type="similarity">
    <text evidence="1">Belongs to the ABC transporter superfamily. Heme (hemin) importer (TC 3.A.1.14.5) family.</text>
</comment>
<name>HMUV_YERPN</name>
<sequence>MVDMAVTPVALLEASHLHYHVQQQALINDVSLHIASGEMVAIIGPNGAGKSTLLRLLTGYLSPSHGECHLLGQNLNSWQPKALARTRAVMRQYSELAFPFSVSEVIQMGRAPYGGSQDRQALQQVMAQTDCLALAQRDYRVLSGGEQQRVQLARVLAQLWQPQPTPRWLFLDEPTSALDLYHQQHTLRLLRQLTRQEPLAVCCVLHDLNLAALYADRIMLLAQGKLVACGTPEEVLNAETLTQWYQADLGVSRHPESALPQIYLRQ</sequence>